<accession>P19766</accession>
<gene>
    <name type="primary">insB</name>
</gene>
<protein>
    <recommendedName>
        <fullName>Insertion element IS1 protein InsB</fullName>
    </recommendedName>
</protein>
<keyword id="KW-0233">DNA recombination</keyword>
<keyword id="KW-0814">Transposable element</keyword>
<keyword id="KW-0815">Transposition</keyword>
<name>INSB_SHISO</name>
<sequence>MIVCAEMDEQWGYVGAKSRQRWLFYAYDSLRKTVVAHVFGERTMATLGRLMSLLSPFDVVIWMTDGWPLYESRLKGKLHVISKRYTQRIERHNLNLRQHLARLGRKSLSFSKSVELHDKVIGHYLNIKHYQ</sequence>
<feature type="chain" id="PRO_0000075407" description="Insertion element IS1 protein InsB">
    <location>
        <begin position="1"/>
        <end position="131"/>
    </location>
</feature>
<proteinExistence type="inferred from homology"/>
<evidence type="ECO:0000305" key="1"/>
<organism>
    <name type="scientific">Shigella sonnei</name>
    <dbReference type="NCBI Taxonomy" id="624"/>
    <lineage>
        <taxon>Bacteria</taxon>
        <taxon>Pseudomonadati</taxon>
        <taxon>Pseudomonadota</taxon>
        <taxon>Gammaproteobacteria</taxon>
        <taxon>Enterobacterales</taxon>
        <taxon>Enterobacteriaceae</taxon>
        <taxon>Shigella</taxon>
    </lineage>
</organism>
<comment type="function">
    <text>Absolutely required for transposition of IS1.</text>
</comment>
<comment type="similarity">
    <text evidence="1">Belongs to the transposase 27 family.</text>
</comment>
<dbReference type="EMBL" id="M37615">
    <property type="protein sequence ID" value="AAA96694.1"/>
    <property type="molecule type" value="Genomic_DNA"/>
</dbReference>
<dbReference type="SMR" id="P19766"/>
<dbReference type="STRING" id="216599.GCA_000283715_04994"/>
<dbReference type="GO" id="GO:0003677">
    <property type="term" value="F:DNA binding"/>
    <property type="evidence" value="ECO:0007669"/>
    <property type="project" value="InterPro"/>
</dbReference>
<dbReference type="GO" id="GO:0004803">
    <property type="term" value="F:transposase activity"/>
    <property type="evidence" value="ECO:0007669"/>
    <property type="project" value="InterPro"/>
</dbReference>
<dbReference type="GO" id="GO:0006313">
    <property type="term" value="P:DNA transposition"/>
    <property type="evidence" value="ECO:0007669"/>
    <property type="project" value="InterPro"/>
</dbReference>
<dbReference type="InterPro" id="IPR005063">
    <property type="entry name" value="Transposase_27"/>
</dbReference>
<dbReference type="InterPro" id="IPR051354">
    <property type="entry name" value="Transposase_27_IS1"/>
</dbReference>
<dbReference type="NCBIfam" id="NF033558">
    <property type="entry name" value="transpos_IS1"/>
    <property type="match status" value="1"/>
</dbReference>
<dbReference type="PANTHER" id="PTHR33293">
    <property type="entry name" value="INSERTION ELEMENT IS1 1 PROTEIN INSB-RELATED"/>
    <property type="match status" value="1"/>
</dbReference>
<dbReference type="PANTHER" id="PTHR33293:SF1">
    <property type="entry name" value="INSERTION ELEMENT IS1 1 PROTEIN INSB-RELATED"/>
    <property type="match status" value="1"/>
</dbReference>
<dbReference type="Pfam" id="PF03400">
    <property type="entry name" value="DDE_Tnp_IS1"/>
    <property type="match status" value="1"/>
</dbReference>
<reference key="1">
    <citation type="journal article" date="1984" name="J. Gen. Appl. Microbiol.">
        <title>An evolutionary analysis of iso-IS1 elements from Escherichia coli and Shigella strains.</title>
        <authorList>
            <person name="Ohtsubo E."/>
            <person name="Ohtsubo H."/>
            <person name="Doroszkiewicz W."/>
            <person name="Nyman K."/>
            <person name="Allen D."/>
            <person name="Davison D."/>
        </authorList>
    </citation>
    <scope>NUCLEOTIDE SEQUENCE [GENOMIC DNA]</scope>
</reference>